<reference key="1">
    <citation type="journal article" date="2001" name="Nature">
        <title>Complete genome sequence of Salmonella enterica serovar Typhimurium LT2.</title>
        <authorList>
            <person name="McClelland M."/>
            <person name="Sanderson K.E."/>
            <person name="Spieth J."/>
            <person name="Clifton S.W."/>
            <person name="Latreille P."/>
            <person name="Courtney L."/>
            <person name="Porwollik S."/>
            <person name="Ali J."/>
            <person name="Dante M."/>
            <person name="Du F."/>
            <person name="Hou S."/>
            <person name="Layman D."/>
            <person name="Leonard S."/>
            <person name="Nguyen C."/>
            <person name="Scott K."/>
            <person name="Holmes A."/>
            <person name="Grewal N."/>
            <person name="Mulvaney E."/>
            <person name="Ryan E."/>
            <person name="Sun H."/>
            <person name="Florea L."/>
            <person name="Miller W."/>
            <person name="Stoneking T."/>
            <person name="Nhan M."/>
            <person name="Waterston R."/>
            <person name="Wilson R.K."/>
        </authorList>
    </citation>
    <scope>NUCLEOTIDE SEQUENCE [LARGE SCALE GENOMIC DNA]</scope>
    <source>
        <strain>LT2 / SGSC1412 / ATCC 700720</strain>
    </source>
</reference>
<gene>
    <name evidence="1" type="primary">viaA</name>
    <name type="ordered locus">STM3878</name>
</gene>
<keyword id="KW-0143">Chaperone</keyword>
<keyword id="KW-0963">Cytoplasm</keyword>
<keyword id="KW-1185">Reference proteome</keyword>
<comment type="function">
    <text evidence="1">Component of the RavA-ViaA chaperone complex, which may act on the membrane to optimize the function of some of the respiratory chains. ViaA stimulates the ATPase activity of RavA.</text>
</comment>
<comment type="subunit">
    <text evidence="1">Homodimer. Interacts with RavA.</text>
</comment>
<comment type="subcellular location">
    <subcellularLocation>
        <location evidence="1">Cytoplasm</location>
    </subcellularLocation>
</comment>
<comment type="similarity">
    <text evidence="1">Belongs to the ViaA family.</text>
</comment>
<comment type="sequence caution" evidence="2">
    <conflict type="erroneous initiation">
        <sequence resource="EMBL-CDS" id="AAL22736"/>
    </conflict>
</comment>
<proteinExistence type="inferred from homology"/>
<accession>Q8ZKW3</accession>
<feature type="chain" id="PRO_0000196590" description="Regulatory protein ViaA">
    <location>
        <begin position="1"/>
        <end position="483"/>
    </location>
</feature>
<dbReference type="EMBL" id="AE006468">
    <property type="protein sequence ID" value="AAL22736.1"/>
    <property type="status" value="ALT_INIT"/>
    <property type="molecule type" value="Genomic_DNA"/>
</dbReference>
<dbReference type="RefSeq" id="WP_014344521.1">
    <property type="nucleotide sequence ID" value="NC_003197.2"/>
</dbReference>
<dbReference type="SMR" id="Q8ZKW3"/>
<dbReference type="STRING" id="99287.STM3878"/>
<dbReference type="PaxDb" id="99287-STM3878"/>
<dbReference type="DNASU" id="1255405"/>
<dbReference type="KEGG" id="stm:STM3878"/>
<dbReference type="PATRIC" id="fig|99287.12.peg.4108"/>
<dbReference type="HOGENOM" id="CLU_022130_0_0_6"/>
<dbReference type="OMA" id="CDQWYQS"/>
<dbReference type="PhylomeDB" id="Q8ZKW3"/>
<dbReference type="Proteomes" id="UP000001014">
    <property type="component" value="Chromosome"/>
</dbReference>
<dbReference type="GO" id="GO:0005829">
    <property type="term" value="C:cytosol"/>
    <property type="evidence" value="ECO:0000318"/>
    <property type="project" value="GO_Central"/>
</dbReference>
<dbReference type="CDD" id="cd01462">
    <property type="entry name" value="VWA_YIEM_type"/>
    <property type="match status" value="1"/>
</dbReference>
<dbReference type="Gene3D" id="3.40.50.410">
    <property type="entry name" value="von Willebrand factor, type A domain"/>
    <property type="match status" value="1"/>
</dbReference>
<dbReference type="HAMAP" id="MF_01626">
    <property type="entry name" value="ViaA"/>
    <property type="match status" value="1"/>
</dbReference>
<dbReference type="InterPro" id="IPR008912">
    <property type="entry name" value="Uncharacterised_CoxE"/>
</dbReference>
<dbReference type="InterPro" id="IPR023481">
    <property type="entry name" value="Uncharacterised_ViaA"/>
</dbReference>
<dbReference type="InterPro" id="IPR002035">
    <property type="entry name" value="VWF_A"/>
</dbReference>
<dbReference type="InterPro" id="IPR036465">
    <property type="entry name" value="vWFA_dom_sf"/>
</dbReference>
<dbReference type="NCBIfam" id="NF008230">
    <property type="entry name" value="PRK10997.1"/>
    <property type="match status" value="1"/>
</dbReference>
<dbReference type="PANTHER" id="PTHR36846">
    <property type="entry name" value="PROTEIN VIAA"/>
    <property type="match status" value="1"/>
</dbReference>
<dbReference type="PANTHER" id="PTHR36846:SF1">
    <property type="entry name" value="PROTEIN VIAA"/>
    <property type="match status" value="1"/>
</dbReference>
<dbReference type="Pfam" id="PF05762">
    <property type="entry name" value="VWA_CoxE"/>
    <property type="match status" value="1"/>
</dbReference>
<dbReference type="SMART" id="SM00327">
    <property type="entry name" value="VWA"/>
    <property type="match status" value="1"/>
</dbReference>
<dbReference type="SUPFAM" id="SSF53300">
    <property type="entry name" value="vWA-like"/>
    <property type="match status" value="1"/>
</dbReference>
<organism>
    <name type="scientific">Salmonella typhimurium (strain LT2 / SGSC1412 / ATCC 700720)</name>
    <dbReference type="NCBI Taxonomy" id="99287"/>
    <lineage>
        <taxon>Bacteria</taxon>
        <taxon>Pseudomonadati</taxon>
        <taxon>Pseudomonadota</taxon>
        <taxon>Gammaproteobacteria</taxon>
        <taxon>Enterobacterales</taxon>
        <taxon>Enterobacteriaceae</taxon>
        <taxon>Salmonella</taxon>
    </lineage>
</organism>
<sequence length="483" mass="55431">MLTLDTLNTMLAVSEEGMVEEMILALLASPQLVIFFEKFPRLKNAVTADLPRWREALRSRLKDARVPPELTEEVMCYQQSQLLSTPQFIVQLPQILALLHRLHSPYAAQAKQLTESNSTFTPALHTLFLQRWRLSLVVQATTLNQQLLEEEREQLLSDVQERMTLSGQLEPTLAENDNAAGRLWDMSAGQLKRGDYQLIVKYGEFLAAQPELMQLAEQLGRSREAKSVPKKDAPMETFRTLVREPATVPEQVDGIQQGDDILRLLPPELATLGITELEYEFYRRLVEKQLLTYRLHGEAWREKVTERPVVHQDVDEQPRGPFIVCVDTSGSMGGFNEQCAKAFCLALMRVALADNRRCFIMLFSTDVVRYELSGPEGIEQAIRFLSQRFRGGTDIASCFRAIIERMQGREWFDADAVVISDFIAQRLPDDVVSKVGELQRLHQHRFHAVAMSAHGKPGIMRIFDHIWRFDTGMRSRLLRRWRR</sequence>
<evidence type="ECO:0000255" key="1">
    <source>
        <dbReference type="HAMAP-Rule" id="MF_01626"/>
    </source>
</evidence>
<evidence type="ECO:0000305" key="2"/>
<protein>
    <recommendedName>
        <fullName evidence="1">Regulatory protein ViaA</fullName>
    </recommendedName>
    <alternativeName>
        <fullName evidence="1">VWA interacting with AAA+ ATPase</fullName>
    </alternativeName>
</protein>
<name>VIAA_SALTY</name>